<reference key="1">
    <citation type="submission" date="2005-09" db="EMBL/GenBank/DDBJ databases">
        <title>Annotation of the Aspergillus terreus NIH2624 genome.</title>
        <authorList>
            <person name="Birren B.W."/>
            <person name="Lander E.S."/>
            <person name="Galagan J.E."/>
            <person name="Nusbaum C."/>
            <person name="Devon K."/>
            <person name="Henn M."/>
            <person name="Ma L.-J."/>
            <person name="Jaffe D.B."/>
            <person name="Butler J."/>
            <person name="Alvarez P."/>
            <person name="Gnerre S."/>
            <person name="Grabherr M."/>
            <person name="Kleber M."/>
            <person name="Mauceli E.W."/>
            <person name="Brockman W."/>
            <person name="Rounsley S."/>
            <person name="Young S.K."/>
            <person name="LaButti K."/>
            <person name="Pushparaj V."/>
            <person name="DeCaprio D."/>
            <person name="Crawford M."/>
            <person name="Koehrsen M."/>
            <person name="Engels R."/>
            <person name="Montgomery P."/>
            <person name="Pearson M."/>
            <person name="Howarth C."/>
            <person name="Larson L."/>
            <person name="Luoma S."/>
            <person name="White J."/>
            <person name="Alvarado L."/>
            <person name="Kodira C.D."/>
            <person name="Zeng Q."/>
            <person name="Oleary S."/>
            <person name="Yandava C."/>
            <person name="Denning D.W."/>
            <person name="Nierman W.C."/>
            <person name="Milne T."/>
            <person name="Madden K."/>
        </authorList>
    </citation>
    <scope>NUCLEOTIDE SEQUENCE [LARGE SCALE GENOMIC DNA]</scope>
    <source>
        <strain>NIH 2624 / FGSC A1156</strain>
    </source>
</reference>
<protein>
    <recommendedName>
        <fullName>COPII coat assembly protein sec16</fullName>
    </recommendedName>
    <alternativeName>
        <fullName>Protein transport protein sec16</fullName>
    </alternativeName>
</protein>
<proteinExistence type="inferred from homology"/>
<comment type="function">
    <text evidence="1">Involved in the initiation of assembly of the COPII coat required for the formation of transport vesicles from the endoplasmic reticulum (ER) and the selection of cargo molecules. Also involved in autophagy (By similarity).</text>
</comment>
<comment type="subcellular location">
    <subcellularLocation>
        <location evidence="1">Endoplasmic reticulum membrane</location>
        <topology evidence="1">Peripheral membrane protein</topology>
        <orientation evidence="1">Cytoplasmic side</orientation>
    </subcellularLocation>
</comment>
<comment type="similarity">
    <text evidence="3">Belongs to the SEC16 family.</text>
</comment>
<feature type="chain" id="PRO_0000295532" description="COPII coat assembly protein sec16">
    <location>
        <begin position="1"/>
        <end position="1806"/>
    </location>
</feature>
<feature type="region of interest" description="Disordered" evidence="2">
    <location>
        <begin position="1"/>
        <end position="202"/>
    </location>
</feature>
<feature type="region of interest" description="Disordered" evidence="2">
    <location>
        <begin position="263"/>
        <end position="305"/>
    </location>
</feature>
<feature type="region of interest" description="Disordered" evidence="2">
    <location>
        <begin position="318"/>
        <end position="846"/>
    </location>
</feature>
<feature type="region of interest" description="Disordered" evidence="2">
    <location>
        <begin position="1418"/>
        <end position="1647"/>
    </location>
</feature>
<feature type="region of interest" description="Disordered" evidence="2">
    <location>
        <begin position="1663"/>
        <end position="1806"/>
    </location>
</feature>
<feature type="compositionally biased region" description="Polar residues" evidence="2">
    <location>
        <begin position="23"/>
        <end position="45"/>
    </location>
</feature>
<feature type="compositionally biased region" description="Polar residues" evidence="2">
    <location>
        <begin position="73"/>
        <end position="91"/>
    </location>
</feature>
<feature type="compositionally biased region" description="Polar residues" evidence="2">
    <location>
        <begin position="128"/>
        <end position="154"/>
    </location>
</feature>
<feature type="compositionally biased region" description="Polar residues" evidence="2">
    <location>
        <begin position="165"/>
        <end position="194"/>
    </location>
</feature>
<feature type="compositionally biased region" description="Polar residues" evidence="2">
    <location>
        <begin position="283"/>
        <end position="304"/>
    </location>
</feature>
<feature type="compositionally biased region" description="Acidic residues" evidence="2">
    <location>
        <begin position="340"/>
        <end position="352"/>
    </location>
</feature>
<feature type="compositionally biased region" description="Acidic residues" evidence="2">
    <location>
        <begin position="360"/>
        <end position="374"/>
    </location>
</feature>
<feature type="compositionally biased region" description="Polar residues" evidence="2">
    <location>
        <begin position="412"/>
        <end position="426"/>
    </location>
</feature>
<feature type="compositionally biased region" description="Basic and acidic residues" evidence="2">
    <location>
        <begin position="461"/>
        <end position="470"/>
    </location>
</feature>
<feature type="compositionally biased region" description="Low complexity" evidence="2">
    <location>
        <begin position="489"/>
        <end position="501"/>
    </location>
</feature>
<feature type="compositionally biased region" description="Pro residues" evidence="2">
    <location>
        <begin position="502"/>
        <end position="524"/>
    </location>
</feature>
<feature type="compositionally biased region" description="Pro residues" evidence="2">
    <location>
        <begin position="571"/>
        <end position="587"/>
    </location>
</feature>
<feature type="compositionally biased region" description="Low complexity" evidence="2">
    <location>
        <begin position="610"/>
        <end position="627"/>
    </location>
</feature>
<feature type="compositionally biased region" description="Pro residues" evidence="2">
    <location>
        <begin position="638"/>
        <end position="658"/>
    </location>
</feature>
<feature type="compositionally biased region" description="Polar residues" evidence="2">
    <location>
        <begin position="662"/>
        <end position="671"/>
    </location>
</feature>
<feature type="compositionally biased region" description="Polar residues" evidence="2">
    <location>
        <begin position="737"/>
        <end position="753"/>
    </location>
</feature>
<feature type="compositionally biased region" description="Low complexity" evidence="2">
    <location>
        <begin position="793"/>
        <end position="805"/>
    </location>
</feature>
<feature type="compositionally biased region" description="Low complexity" evidence="2">
    <location>
        <begin position="830"/>
        <end position="844"/>
    </location>
</feature>
<feature type="compositionally biased region" description="Polar residues" evidence="2">
    <location>
        <begin position="1456"/>
        <end position="1465"/>
    </location>
</feature>
<feature type="compositionally biased region" description="Polar residues" evidence="2">
    <location>
        <begin position="1503"/>
        <end position="1521"/>
    </location>
</feature>
<feature type="compositionally biased region" description="Polar residues" evidence="2">
    <location>
        <begin position="1528"/>
        <end position="1540"/>
    </location>
</feature>
<feature type="compositionally biased region" description="Polar residues" evidence="2">
    <location>
        <begin position="1547"/>
        <end position="1559"/>
    </location>
</feature>
<feature type="compositionally biased region" description="Basic and acidic residues" evidence="2">
    <location>
        <begin position="1591"/>
        <end position="1613"/>
    </location>
</feature>
<feature type="compositionally biased region" description="Low complexity" evidence="2">
    <location>
        <begin position="1686"/>
        <end position="1696"/>
    </location>
</feature>
<feature type="compositionally biased region" description="Pro residues" evidence="2">
    <location>
        <begin position="1697"/>
        <end position="1710"/>
    </location>
</feature>
<feature type="compositionally biased region" description="Low complexity" evidence="2">
    <location>
        <begin position="1747"/>
        <end position="1761"/>
    </location>
</feature>
<name>SEC16_ASPTN</name>
<evidence type="ECO:0000250" key="1"/>
<evidence type="ECO:0000256" key="2">
    <source>
        <dbReference type="SAM" id="MobiDB-lite"/>
    </source>
</evidence>
<evidence type="ECO:0000305" key="3"/>
<sequence>MAASEQFASWNPALRSEDHSIPTIENTLDQQPTSPAEQVESQAKTVTPPPQEDSPLQEVPEDVVDTVVPPVSGDTQPIANALDQDQTQPQPEETDRDIPPMIVDTPKDTQETQESVPRNATDEGNVFSLESNDSAFPTTQNAPDLSWAEDSQPQAVERHDDSVWTLHQQSKETPTSPNGDFGTTSHDLWGSPTSPGGEHDFFDQLKTQTKPIYVPPESESRYEEGVPLLDEGVSSPTEPTANQESRIDQIFDGDEDEEGAFFNEVQESASTDESRPYGHMTRKSTSQVLDSLDTSMKSPVSDASPTAREFDNILAAAASGNQVKKSTSEEDLAARWQAELSDEEPEPAPEDDLAARWQAELDDDDDMLLEDETSGELPNQEMHMNGIASQAAPPVLSSPFGTPESAARPKAQPTSYTPHQPSTSDLLQGIPAQGYAQGNTTTAPNYFAPQPPKPATSRAESFAERSKEGYKSPYDLPEDLARPRRAAATHRPVVVPGNNMAPGPPAASVPPPQRAPSMPTPPMATLPSTTTAPPAPPKNFYEELPPPPPKPQSRPSSSGRYTPGPASSHPVLPPPSNPYAAVPPPPTVDSSIPPHLHQPEKTDPYVNLLAPSAPSAPSAPSAASRYSPKPPSLQGGVKPPPSPRYSPAPPPSTAPVPPRNRYASQPSSGPGQTAVLPFQPRTSSPLAYHEKVSYQPQEGLRKPSFAEQESAAGPQNEIQEQPVGHHVGQSVPGGTVVDTQNTGAPMAPQQTSPPRNPYAPPAYVNDFSKRVAPMTSAPPPASAPPATETQFMPPRRSQTQSPSQQVLGPRLSVPAVDPLQRPASVHGSGSPTKSSSPYAPSAPAHNRVASQQLEFIPPTDGQELDPLERWRGAPIVKFGFGGAIVSCFPKHIPRYTAGQPAPKIMAAPGEARIHQLRDWVPIADSIVQHPGPLKNKSKKKDLLAWLSSKIAQFENEGISEAAQLHPESGMRHDEKILLWKIIRILVEHDGTLEGSEPIKKALRGVIFPHLAENPDSSESYGANVPSFGDIKPLDAPSKSDAMDPQAIGNLRNYLLLGDREKAVWSAVDNRLWGHAMVIASTMDKSVWKQVVQEFVRREVRSATGNTESLAALYEIFAGNVEESIDELVPPSARAGMQMISTVDGHGPAKNALDGLNSWRDTLGLVLNNRSPDDHQALLSLGRLLLSYGRVEAAHICFIFSRAAVFGGADDPQSCIVLLGADHQHLPSTILQDEDAFLLTEAYEYATTILAGAPMATLPHLLAFKLLHAWSLADRGRKAEAQQYCDAIAASLKSTTKPSGYHNQHLLFGVDELSARLRQTTNDGGSSWISKPSMEKVSGSMWAKFNSFVAGDDSDAASTGSGKAGEGDVGPFARFTGTPTLSLFLAADPPVTSQITNMPLMHLLNNLADGLRWTPSAHHPMDFPFPQRRGSQEPATPMENTFYQGGGPYGSPPAVGYQSTPPQTSYMPLAPVEEDSATQSYPAASAPPHEPAMNTSPYLPPGGPSSQPLNRGSMMDSQTGASSYMPAETSGSSYTPPTFNTGYEPPTIETTAAPDTQSTDEPADDVPLKKKKSFMDDDDDDDIAARAAALQKAEKERKDREAEENFRRIAEAEAKNAPQQKKSSWWPGWFGGGKKEENNNSGGPIRAKLGEENSFYYDKELKKWVNKKDPNSATVSRGTPPPPRGAAPPSRTASGSSAPPPAASPKPPGPDSRPTSSAGAPPPQTGSPAPSLLGAPPPFLNAVPRSVSTGAAAPPTRPGSSSGPPPRPATSLSTASSIDDLLGPPQARKGGTVKGKKKGRYVDVMAK</sequence>
<gene>
    <name type="primary">sec16</name>
    <name type="ORF">ATEG_07055</name>
</gene>
<keyword id="KW-0072">Autophagy</keyword>
<keyword id="KW-0256">Endoplasmic reticulum</keyword>
<keyword id="KW-0931">ER-Golgi transport</keyword>
<keyword id="KW-0472">Membrane</keyword>
<keyword id="KW-0653">Protein transport</keyword>
<keyword id="KW-1185">Reference proteome</keyword>
<keyword id="KW-0813">Transport</keyword>
<dbReference type="EMBL" id="CH476603">
    <property type="protein sequence ID" value="EAU32439.1"/>
    <property type="molecule type" value="Genomic_DNA"/>
</dbReference>
<dbReference type="RefSeq" id="XP_001209741.1">
    <property type="nucleotide sequence ID" value="XM_001209741.1"/>
</dbReference>
<dbReference type="STRING" id="341663.Q0CGY7"/>
<dbReference type="EnsemblFungi" id="EAU32439">
    <property type="protein sequence ID" value="EAU32439"/>
    <property type="gene ID" value="ATEG_07055"/>
</dbReference>
<dbReference type="GeneID" id="4319158"/>
<dbReference type="VEuPathDB" id="FungiDB:ATEG_07055"/>
<dbReference type="eggNOG" id="KOG1913">
    <property type="taxonomic scope" value="Eukaryota"/>
</dbReference>
<dbReference type="HOGENOM" id="CLU_001147_0_0_1"/>
<dbReference type="OMA" id="YKSPYDL"/>
<dbReference type="OrthoDB" id="8918678at2759"/>
<dbReference type="Proteomes" id="UP000007963">
    <property type="component" value="Unassembled WGS sequence"/>
</dbReference>
<dbReference type="GO" id="GO:0070971">
    <property type="term" value="C:endoplasmic reticulum exit site"/>
    <property type="evidence" value="ECO:0007669"/>
    <property type="project" value="UniProtKB-ARBA"/>
</dbReference>
<dbReference type="GO" id="GO:0005789">
    <property type="term" value="C:endoplasmic reticulum membrane"/>
    <property type="evidence" value="ECO:0007669"/>
    <property type="project" value="UniProtKB-SubCell"/>
</dbReference>
<dbReference type="GO" id="GO:0012507">
    <property type="term" value="C:ER to Golgi transport vesicle membrane"/>
    <property type="evidence" value="ECO:0007669"/>
    <property type="project" value="TreeGrafter"/>
</dbReference>
<dbReference type="GO" id="GO:0006914">
    <property type="term" value="P:autophagy"/>
    <property type="evidence" value="ECO:0007669"/>
    <property type="project" value="UniProtKB-KW"/>
</dbReference>
<dbReference type="GO" id="GO:0007030">
    <property type="term" value="P:Golgi organization"/>
    <property type="evidence" value="ECO:0007669"/>
    <property type="project" value="TreeGrafter"/>
</dbReference>
<dbReference type="GO" id="GO:0046907">
    <property type="term" value="P:intracellular transport"/>
    <property type="evidence" value="ECO:0007669"/>
    <property type="project" value="UniProtKB-ARBA"/>
</dbReference>
<dbReference type="GO" id="GO:0070973">
    <property type="term" value="P:protein localization to endoplasmic reticulum exit site"/>
    <property type="evidence" value="ECO:0007669"/>
    <property type="project" value="TreeGrafter"/>
</dbReference>
<dbReference type="GO" id="GO:0015031">
    <property type="term" value="P:protein transport"/>
    <property type="evidence" value="ECO:0007669"/>
    <property type="project" value="UniProtKB-KW"/>
</dbReference>
<dbReference type="GO" id="GO:0016192">
    <property type="term" value="P:vesicle-mediated transport"/>
    <property type="evidence" value="ECO:0007669"/>
    <property type="project" value="UniProtKB-KW"/>
</dbReference>
<dbReference type="CDD" id="cd09233">
    <property type="entry name" value="ACE1-Sec16-like"/>
    <property type="match status" value="1"/>
</dbReference>
<dbReference type="FunFam" id="1.25.40.1030:FF:000008">
    <property type="entry name" value="Protein transport protein sec16"/>
    <property type="match status" value="1"/>
</dbReference>
<dbReference type="Gene3D" id="1.25.40.1030">
    <property type="match status" value="1"/>
</dbReference>
<dbReference type="InterPro" id="IPR024340">
    <property type="entry name" value="Sec16_CCD"/>
</dbReference>
<dbReference type="InterPro" id="IPR024468">
    <property type="entry name" value="Sec16_N"/>
</dbReference>
<dbReference type="InterPro" id="IPR024298">
    <property type="entry name" value="Sec16_Sec23-bd"/>
</dbReference>
<dbReference type="PANTHER" id="PTHR13402">
    <property type="entry name" value="RGPR-RELATED"/>
    <property type="match status" value="1"/>
</dbReference>
<dbReference type="PANTHER" id="PTHR13402:SF6">
    <property type="entry name" value="SECRETORY 16, ISOFORM I"/>
    <property type="match status" value="1"/>
</dbReference>
<dbReference type="Pfam" id="PF12932">
    <property type="entry name" value="Sec16"/>
    <property type="match status" value="1"/>
</dbReference>
<dbReference type="Pfam" id="PF12935">
    <property type="entry name" value="Sec16_N"/>
    <property type="match status" value="1"/>
</dbReference>
<dbReference type="Pfam" id="PF12931">
    <property type="entry name" value="TPR_Sec16"/>
    <property type="match status" value="1"/>
</dbReference>
<organism>
    <name type="scientific">Aspergillus terreus (strain NIH 2624 / FGSC A1156)</name>
    <dbReference type="NCBI Taxonomy" id="341663"/>
    <lineage>
        <taxon>Eukaryota</taxon>
        <taxon>Fungi</taxon>
        <taxon>Dikarya</taxon>
        <taxon>Ascomycota</taxon>
        <taxon>Pezizomycotina</taxon>
        <taxon>Eurotiomycetes</taxon>
        <taxon>Eurotiomycetidae</taxon>
        <taxon>Eurotiales</taxon>
        <taxon>Aspergillaceae</taxon>
        <taxon>Aspergillus</taxon>
        <taxon>Aspergillus subgen. Circumdati</taxon>
    </lineage>
</organism>
<accession>Q0CGY7</accession>